<organism>
    <name type="scientific">Phoneutria nigriventer</name>
    <name type="common">Brazilian armed spider</name>
    <name type="synonym">Ctenus nigriventer</name>
    <dbReference type="NCBI Taxonomy" id="6918"/>
    <lineage>
        <taxon>Eukaryota</taxon>
        <taxon>Metazoa</taxon>
        <taxon>Ecdysozoa</taxon>
        <taxon>Arthropoda</taxon>
        <taxon>Chelicerata</taxon>
        <taxon>Arachnida</taxon>
        <taxon>Araneae</taxon>
        <taxon>Araneomorphae</taxon>
        <taxon>Entelegynae</taxon>
        <taxon>Lycosoidea</taxon>
        <taxon>Ctenidae</taxon>
        <taxon>Phoneutria</taxon>
    </lineage>
</organism>
<sequence>SFCIPFKPCKSDENCCKKFKCKTTGIVKLCRW</sequence>
<keyword id="KW-0903">Direct protein sequencing</keyword>
<keyword id="KW-1015">Disulfide bond</keyword>
<keyword id="KW-0872">Ion channel impairing toxin</keyword>
<keyword id="KW-0960">Knottin</keyword>
<keyword id="KW-0528">Neurotoxin</keyword>
<keyword id="KW-0964">Secreted</keyword>
<keyword id="KW-0800">Toxin</keyword>
<keyword id="KW-0738">Voltage-gated sodium channel impairing toxin</keyword>
<evidence type="ECO:0000250" key="1"/>
<evidence type="ECO:0000269" key="2">
    <source>
    </source>
</evidence>
<evidence type="ECO:0000269" key="3">
    <source>
    </source>
</evidence>
<evidence type="ECO:0000305" key="4"/>
<protein>
    <recommendedName>
        <fullName>U5-ctenitoxin-Pn1a</fullName>
        <shortName>U5-CNTX-Pn1a</shortName>
    </recommendedName>
    <alternativeName>
        <fullName>Neurotoxin Tx2-9</fullName>
    </alternativeName>
</protein>
<name>TX29_PHONI</name>
<accession>P29426</accession>
<reference key="1">
    <citation type="journal article" date="1992" name="FEBS Lett.">
        <title>The purification and amino acid sequences of four Tx2 neurotoxins from the venom of the Brazilian 'armed' spider Phoneutria nigriventer (Keys).</title>
        <authorList>
            <person name="Cordeiro M.N."/>
            <person name="Diniz C.R."/>
            <person name="Valentim A.D.C."/>
            <person name="von Eickstedt V.R.D."/>
            <person name="Gilroy J."/>
            <person name="Richardson M."/>
        </authorList>
    </citation>
    <scope>PROTEIN SEQUENCE</scope>
    <scope>FUNCTION</scope>
    <scope>SUBCELLULAR LOCATION</scope>
    <scope>TISSUE SPECIFICITY</scope>
    <scope>MASS SPECTROMETRY</scope>
    <source>
        <tissue>Venom</tissue>
    </source>
</reference>
<reference key="2">
    <citation type="journal article" date="2006" name="Comp. Biochem. Physiol.">
        <title>Comparison of the partial proteomes of the venoms of Brazilian spiders of the genus Phoneutria.</title>
        <authorList>
            <person name="Richardson M."/>
            <person name="Pimenta A.M."/>
            <person name="Bemquerer M.P."/>
            <person name="Santoro M.M."/>
            <person name="Beirao P.S."/>
            <person name="Lima M.E."/>
            <person name="Figueiredo S.G."/>
            <person name="Bloch C. Jr."/>
            <person name="Vasconcelos E.A."/>
            <person name="Campos F.A."/>
            <person name="Gomes P.C."/>
            <person name="Cordeiro M.N."/>
        </authorList>
    </citation>
    <scope>PROTEIN SEQUENCE</scope>
    <scope>SUBCELLULAR LOCATION</scope>
    <scope>TISSUE SPECIFICITY</scope>
    <scope>MASS SPECTROMETRY</scope>
    <source>
        <tissue>Venom</tissue>
    </source>
</reference>
<comment type="function">
    <text evidence="2">Blocks voltage-gated sodium channels (Nav). Causes tail erection, scratching and a reduction in mobility at a dose level of 1.40 mg/mouse.</text>
</comment>
<comment type="subcellular location">
    <subcellularLocation>
        <location evidence="2 3">Secreted</location>
    </subcellularLocation>
</comment>
<comment type="tissue specificity">
    <text evidence="2 3">Expressed by the venom gland.</text>
</comment>
<comment type="domain">
    <text evidence="1">The presence of a 'disulfide through disulfide knot' structurally defines this protein as a knottin.</text>
</comment>
<comment type="mass spectrometry"/>
<comment type="mass spectrometry"/>
<comment type="similarity">
    <text evidence="4">Belongs to the neurotoxin 10 (Hwtx-1) family. 60 (Tx2-9) subfamily.</text>
</comment>
<proteinExistence type="evidence at protein level"/>
<feature type="peptide" id="PRO_0000044968" description="U5-ctenitoxin-Pn1a">
    <location>
        <begin position="1"/>
        <end position="32"/>
    </location>
</feature>
<feature type="disulfide bond" evidence="1">
    <location>
        <begin position="3"/>
        <end position="16"/>
    </location>
</feature>
<feature type="disulfide bond" evidence="1">
    <location>
        <begin position="9"/>
        <end position="21"/>
    </location>
</feature>
<feature type="disulfide bond" evidence="1">
    <location>
        <begin position="15"/>
        <end position="30"/>
    </location>
</feature>
<dbReference type="PIR" id="S29217">
    <property type="entry name" value="S29217"/>
</dbReference>
<dbReference type="SMR" id="P29426"/>
<dbReference type="ArachnoServer" id="AS000247">
    <property type="toxin name" value="U5-ctenitoxin-Pn1a"/>
</dbReference>
<dbReference type="GO" id="GO:0005576">
    <property type="term" value="C:extracellular region"/>
    <property type="evidence" value="ECO:0007669"/>
    <property type="project" value="UniProtKB-SubCell"/>
</dbReference>
<dbReference type="GO" id="GO:0008200">
    <property type="term" value="F:ion channel inhibitor activity"/>
    <property type="evidence" value="ECO:0007669"/>
    <property type="project" value="InterPro"/>
</dbReference>
<dbReference type="GO" id="GO:0017080">
    <property type="term" value="F:sodium channel regulator activity"/>
    <property type="evidence" value="ECO:0007669"/>
    <property type="project" value="UniProtKB-KW"/>
</dbReference>
<dbReference type="GO" id="GO:0090729">
    <property type="term" value="F:toxin activity"/>
    <property type="evidence" value="ECO:0007669"/>
    <property type="project" value="UniProtKB-KW"/>
</dbReference>
<dbReference type="InterPro" id="IPR011696">
    <property type="entry name" value="Huwentoxin-1"/>
</dbReference>
<dbReference type="Pfam" id="PF07740">
    <property type="entry name" value="Toxin_12"/>
    <property type="match status" value="1"/>
</dbReference>